<name>SWRI_SERLI</name>
<dbReference type="EC" id="2.3.1.184"/>
<dbReference type="EMBL" id="U22823">
    <property type="protein sequence ID" value="AAB18141.1"/>
    <property type="molecule type" value="Genomic_DNA"/>
</dbReference>
<dbReference type="PIR" id="S71036">
    <property type="entry name" value="S71036"/>
</dbReference>
<dbReference type="SMR" id="P52989"/>
<dbReference type="GO" id="GO:0061579">
    <property type="term" value="F:N-acyl homoserine lactone synthase activity"/>
    <property type="evidence" value="ECO:0007669"/>
    <property type="project" value="UniProtKB-EC"/>
</dbReference>
<dbReference type="GO" id="GO:0009372">
    <property type="term" value="P:quorum sensing"/>
    <property type="evidence" value="ECO:0007669"/>
    <property type="project" value="UniProtKB-KW"/>
</dbReference>
<dbReference type="GO" id="GO:0007165">
    <property type="term" value="P:signal transduction"/>
    <property type="evidence" value="ECO:0007669"/>
    <property type="project" value="TreeGrafter"/>
</dbReference>
<dbReference type="Gene3D" id="3.40.630.30">
    <property type="match status" value="1"/>
</dbReference>
<dbReference type="InterPro" id="IPR016181">
    <property type="entry name" value="Acyl_CoA_acyltransferase"/>
</dbReference>
<dbReference type="InterPro" id="IPR018311">
    <property type="entry name" value="Autoind_synth_CS"/>
</dbReference>
<dbReference type="InterPro" id="IPR001690">
    <property type="entry name" value="Autoind_synthase"/>
</dbReference>
<dbReference type="PANTHER" id="PTHR39322">
    <property type="entry name" value="ACYL-HOMOSERINE-LACTONE SYNTHASE"/>
    <property type="match status" value="1"/>
</dbReference>
<dbReference type="PANTHER" id="PTHR39322:SF1">
    <property type="entry name" value="ISOVALERYL-HOMOSERINE LACTONE SYNTHASE"/>
    <property type="match status" value="1"/>
</dbReference>
<dbReference type="Pfam" id="PF00765">
    <property type="entry name" value="Autoind_synth"/>
    <property type="match status" value="1"/>
</dbReference>
<dbReference type="PRINTS" id="PR01549">
    <property type="entry name" value="AUTOINDCRSYN"/>
</dbReference>
<dbReference type="SUPFAM" id="SSF55729">
    <property type="entry name" value="Acyl-CoA N-acyltransferases (Nat)"/>
    <property type="match status" value="1"/>
</dbReference>
<dbReference type="PROSITE" id="PS00949">
    <property type="entry name" value="AUTOINDUCER_SYNTH_1"/>
    <property type="match status" value="1"/>
</dbReference>
<dbReference type="PROSITE" id="PS51187">
    <property type="entry name" value="AUTOINDUCER_SYNTH_2"/>
    <property type="match status" value="1"/>
</dbReference>
<comment type="function">
    <text>Required for the synthesis of BHL (N-butanoyl-L-homoserine lactone).</text>
</comment>
<comment type="catalytic activity">
    <reaction>
        <text>a fatty acyl-[ACP] + S-adenosyl-L-methionine = an N-acyl-L-homoserine lactone + S-methyl-5'-thioadenosine + holo-[ACP] + H(+)</text>
        <dbReference type="Rhea" id="RHEA:10096"/>
        <dbReference type="Rhea" id="RHEA-COMP:9685"/>
        <dbReference type="Rhea" id="RHEA-COMP:14125"/>
        <dbReference type="ChEBI" id="CHEBI:15378"/>
        <dbReference type="ChEBI" id="CHEBI:17509"/>
        <dbReference type="ChEBI" id="CHEBI:55474"/>
        <dbReference type="ChEBI" id="CHEBI:59789"/>
        <dbReference type="ChEBI" id="CHEBI:64479"/>
        <dbReference type="ChEBI" id="CHEBI:138651"/>
        <dbReference type="EC" id="2.3.1.184"/>
    </reaction>
</comment>
<comment type="similarity">
    <text evidence="1">Belongs to the autoinducer synthase family.</text>
</comment>
<keyword id="KW-0071">Autoinducer synthesis</keyword>
<keyword id="KW-0673">Quorum sensing</keyword>
<keyword id="KW-0949">S-adenosyl-L-methionine</keyword>
<keyword id="KW-0808">Transferase</keyword>
<evidence type="ECO:0000255" key="1">
    <source>
        <dbReference type="PROSITE-ProRule" id="PRU00533"/>
    </source>
</evidence>
<gene>
    <name type="primary">swrI</name>
</gene>
<accession>P52989</accession>
<reference key="1">
    <citation type="journal article" date="1996" name="Mol. Microbiol.">
        <title>Involvement of N-acyl-L-hormoserine lactone autoinducers in controlling the multicellular behaviour of Serratia liquefaciens.</title>
        <authorList>
            <person name="Eberl L."/>
            <person name="Winson M.K."/>
            <person name="Sternberg C."/>
            <person name="Stewart G.S.A.B."/>
            <person name="Christiansen G."/>
            <person name="Chhebra S.R."/>
            <person name="Bycroft B."/>
            <person name="Williams P."/>
            <person name="Molin S."/>
            <person name="Givskov M."/>
        </authorList>
    </citation>
    <scope>NUCLEOTIDE SEQUENCE [GENOMIC DNA]</scope>
    <source>
        <strain>MG1</strain>
    </source>
</reference>
<protein>
    <recommendedName>
        <fullName>Acyl-homoserine-lactone synthase</fullName>
        <ecNumber>2.3.1.184</ecNumber>
    </recommendedName>
    <alternativeName>
        <fullName>Autoinducer synthesis protein SwrI</fullName>
    </alternativeName>
</protein>
<feature type="chain" id="PRO_0000210897" description="Acyl-homoserine-lactone synthase">
    <location>
        <begin position="1"/>
        <end position="200"/>
    </location>
</feature>
<proteinExistence type="inferred from homology"/>
<sequence>MIELFDVDYNLLPDNRSKELFSLRKKTFKDRLDWLVNCENNMEFDEYDNRHATYIFGTYQNHVICSLRFIETKYPNMISDGVFDTYFNDIKLPDGNYVEASRLFIDKARIQALQLHQAPISAMLFLSMINYARNCGYEGIYAIISHPMRIIFQRSGWHISVVKTGCSEKNKNIYLIYMPIDDANRNRLLARINQHATKMG</sequence>
<organism>
    <name type="scientific">Serratia liquefaciens</name>
    <dbReference type="NCBI Taxonomy" id="614"/>
    <lineage>
        <taxon>Bacteria</taxon>
        <taxon>Pseudomonadati</taxon>
        <taxon>Pseudomonadota</taxon>
        <taxon>Gammaproteobacteria</taxon>
        <taxon>Enterobacterales</taxon>
        <taxon>Yersiniaceae</taxon>
        <taxon>Serratia</taxon>
    </lineage>
</organism>